<feature type="chain" id="PRO_0000268470" description="Bifunctional protein FolD 1">
    <location>
        <begin position="1"/>
        <end position="297"/>
    </location>
</feature>
<feature type="binding site" evidence="1">
    <location>
        <begin position="164"/>
        <end position="166"/>
    </location>
    <ligand>
        <name>NADP(+)</name>
        <dbReference type="ChEBI" id="CHEBI:58349"/>
    </ligand>
</feature>
<feature type="binding site" evidence="1">
    <location>
        <position position="230"/>
    </location>
    <ligand>
        <name>NADP(+)</name>
        <dbReference type="ChEBI" id="CHEBI:58349"/>
    </ligand>
</feature>
<protein>
    <recommendedName>
        <fullName evidence="1">Bifunctional protein FolD 1</fullName>
    </recommendedName>
    <domain>
        <recommendedName>
            <fullName evidence="1">Methylenetetrahydrofolate dehydrogenase</fullName>
            <ecNumber evidence="1">1.5.1.5</ecNumber>
        </recommendedName>
    </domain>
    <domain>
        <recommendedName>
            <fullName evidence="1">Methenyltetrahydrofolate cyclohydrolase</fullName>
            <ecNumber evidence="1">3.5.4.9</ecNumber>
        </recommendedName>
    </domain>
</protein>
<reference key="1">
    <citation type="journal article" date="2006" name="Proc. Natl. Acad. Sci. U.S.A.">
        <title>The complete genome of Rhodococcus sp. RHA1 provides insights into a catabolic powerhouse.</title>
        <authorList>
            <person name="McLeod M.P."/>
            <person name="Warren R.L."/>
            <person name="Hsiao W.W.L."/>
            <person name="Araki N."/>
            <person name="Myhre M."/>
            <person name="Fernandes C."/>
            <person name="Miyazawa D."/>
            <person name="Wong W."/>
            <person name="Lillquist A.L."/>
            <person name="Wang D."/>
            <person name="Dosanjh M."/>
            <person name="Hara H."/>
            <person name="Petrescu A."/>
            <person name="Morin R.D."/>
            <person name="Yang G."/>
            <person name="Stott J.M."/>
            <person name="Schein J.E."/>
            <person name="Shin H."/>
            <person name="Smailus D."/>
            <person name="Siddiqui A.S."/>
            <person name="Marra M.A."/>
            <person name="Jones S.J.M."/>
            <person name="Holt R."/>
            <person name="Brinkman F.S.L."/>
            <person name="Miyauchi K."/>
            <person name="Fukuda M."/>
            <person name="Davies J.E."/>
            <person name="Mohn W.W."/>
            <person name="Eltis L.D."/>
        </authorList>
    </citation>
    <scope>NUCLEOTIDE SEQUENCE [LARGE SCALE GENOMIC DNA]</scope>
    <source>
        <strain>RHA1</strain>
    </source>
</reference>
<organism>
    <name type="scientific">Rhodococcus jostii (strain RHA1)</name>
    <dbReference type="NCBI Taxonomy" id="101510"/>
    <lineage>
        <taxon>Bacteria</taxon>
        <taxon>Bacillati</taxon>
        <taxon>Actinomycetota</taxon>
        <taxon>Actinomycetes</taxon>
        <taxon>Mycobacteriales</taxon>
        <taxon>Nocardiaceae</taxon>
        <taxon>Rhodococcus</taxon>
    </lineage>
</organism>
<proteinExistence type="inferred from homology"/>
<gene>
    <name evidence="1" type="primary">folD1</name>
    <name type="ordered locus">RHA1_ro01817</name>
</gene>
<dbReference type="EC" id="1.5.1.5" evidence="1"/>
<dbReference type="EC" id="3.5.4.9" evidence="1"/>
<dbReference type="EMBL" id="CP000431">
    <property type="protein sequence ID" value="ABG93628.1"/>
    <property type="molecule type" value="Genomic_DNA"/>
</dbReference>
<dbReference type="RefSeq" id="WP_011594739.1">
    <property type="nucleotide sequence ID" value="NC_008268.1"/>
</dbReference>
<dbReference type="SMR" id="Q0SFQ8"/>
<dbReference type="KEGG" id="rha:RHA1_ro01817"/>
<dbReference type="PATRIC" id="fig|101510.16.peg.1836"/>
<dbReference type="eggNOG" id="COG0190">
    <property type="taxonomic scope" value="Bacteria"/>
</dbReference>
<dbReference type="HOGENOM" id="CLU_034045_2_1_11"/>
<dbReference type="OrthoDB" id="9803580at2"/>
<dbReference type="UniPathway" id="UPA00193"/>
<dbReference type="Proteomes" id="UP000008710">
    <property type="component" value="Chromosome"/>
</dbReference>
<dbReference type="GO" id="GO:0005829">
    <property type="term" value="C:cytosol"/>
    <property type="evidence" value="ECO:0007669"/>
    <property type="project" value="TreeGrafter"/>
</dbReference>
<dbReference type="GO" id="GO:0004477">
    <property type="term" value="F:methenyltetrahydrofolate cyclohydrolase activity"/>
    <property type="evidence" value="ECO:0007669"/>
    <property type="project" value="UniProtKB-UniRule"/>
</dbReference>
<dbReference type="GO" id="GO:0004488">
    <property type="term" value="F:methylenetetrahydrofolate dehydrogenase (NADP+) activity"/>
    <property type="evidence" value="ECO:0007669"/>
    <property type="project" value="UniProtKB-UniRule"/>
</dbReference>
<dbReference type="GO" id="GO:0000105">
    <property type="term" value="P:L-histidine biosynthetic process"/>
    <property type="evidence" value="ECO:0007669"/>
    <property type="project" value="UniProtKB-KW"/>
</dbReference>
<dbReference type="GO" id="GO:0009086">
    <property type="term" value="P:methionine biosynthetic process"/>
    <property type="evidence" value="ECO:0007669"/>
    <property type="project" value="UniProtKB-KW"/>
</dbReference>
<dbReference type="GO" id="GO:0006164">
    <property type="term" value="P:purine nucleotide biosynthetic process"/>
    <property type="evidence" value="ECO:0007669"/>
    <property type="project" value="UniProtKB-KW"/>
</dbReference>
<dbReference type="GO" id="GO:0035999">
    <property type="term" value="P:tetrahydrofolate interconversion"/>
    <property type="evidence" value="ECO:0007669"/>
    <property type="project" value="UniProtKB-UniRule"/>
</dbReference>
<dbReference type="CDD" id="cd01080">
    <property type="entry name" value="NAD_bind_m-THF_DH_Cyclohyd"/>
    <property type="match status" value="1"/>
</dbReference>
<dbReference type="Gene3D" id="3.40.50.10860">
    <property type="entry name" value="Leucine Dehydrogenase, chain A, domain 1"/>
    <property type="match status" value="1"/>
</dbReference>
<dbReference type="Gene3D" id="3.40.50.720">
    <property type="entry name" value="NAD(P)-binding Rossmann-like Domain"/>
    <property type="match status" value="1"/>
</dbReference>
<dbReference type="HAMAP" id="MF_01576">
    <property type="entry name" value="THF_DHG_CYH"/>
    <property type="match status" value="1"/>
</dbReference>
<dbReference type="InterPro" id="IPR046346">
    <property type="entry name" value="Aminoacid_DH-like_N_sf"/>
</dbReference>
<dbReference type="InterPro" id="IPR036291">
    <property type="entry name" value="NAD(P)-bd_dom_sf"/>
</dbReference>
<dbReference type="InterPro" id="IPR000672">
    <property type="entry name" value="THF_DH/CycHdrlase"/>
</dbReference>
<dbReference type="InterPro" id="IPR020630">
    <property type="entry name" value="THF_DH/CycHdrlase_cat_dom"/>
</dbReference>
<dbReference type="InterPro" id="IPR020631">
    <property type="entry name" value="THF_DH/CycHdrlase_NAD-bd_dom"/>
</dbReference>
<dbReference type="PANTHER" id="PTHR48099:SF5">
    <property type="entry name" value="C-1-TETRAHYDROFOLATE SYNTHASE, CYTOPLASMIC"/>
    <property type="match status" value="1"/>
</dbReference>
<dbReference type="PANTHER" id="PTHR48099">
    <property type="entry name" value="C-1-TETRAHYDROFOLATE SYNTHASE, CYTOPLASMIC-RELATED"/>
    <property type="match status" value="1"/>
</dbReference>
<dbReference type="Pfam" id="PF00763">
    <property type="entry name" value="THF_DHG_CYH"/>
    <property type="match status" value="1"/>
</dbReference>
<dbReference type="Pfam" id="PF02882">
    <property type="entry name" value="THF_DHG_CYH_C"/>
    <property type="match status" value="1"/>
</dbReference>
<dbReference type="PRINTS" id="PR00085">
    <property type="entry name" value="THFDHDRGNASE"/>
</dbReference>
<dbReference type="SUPFAM" id="SSF53223">
    <property type="entry name" value="Aminoacid dehydrogenase-like, N-terminal domain"/>
    <property type="match status" value="1"/>
</dbReference>
<dbReference type="SUPFAM" id="SSF51735">
    <property type="entry name" value="NAD(P)-binding Rossmann-fold domains"/>
    <property type="match status" value="1"/>
</dbReference>
<keyword id="KW-0028">Amino-acid biosynthesis</keyword>
<keyword id="KW-0368">Histidine biosynthesis</keyword>
<keyword id="KW-0378">Hydrolase</keyword>
<keyword id="KW-0486">Methionine biosynthesis</keyword>
<keyword id="KW-0511">Multifunctional enzyme</keyword>
<keyword id="KW-0521">NADP</keyword>
<keyword id="KW-0554">One-carbon metabolism</keyword>
<keyword id="KW-0560">Oxidoreductase</keyword>
<keyword id="KW-0658">Purine biosynthesis</keyword>
<name>FOLD1_RHOJR</name>
<evidence type="ECO:0000255" key="1">
    <source>
        <dbReference type="HAMAP-Rule" id="MF_01576"/>
    </source>
</evidence>
<sequence length="297" mass="30064">MTRSLGGAELATSIRNDASVAAAALNDLGTRPKLAVVQATDDESTAWYVRSIASAAKRTGILCDIVDLGAAASTEQIRSTLVELGHDPDVHGIILQTPLPDGTDLDALREAINPAKDVDGANPVSLGRLVARLPAFAPATAQAVIALLDHHGISPHARTATVVGRSTVVGSPVAHLLVQRNATVTVCHRHTTDLAAGTRDADILVVAVGIPGLITADHVADGAVVIDVGTTATADGQLLGDVDAAAVDGRAGALTPVPGGVGPVTTALLLNHTVDAAGTQYAQTRSESVLAGFRSSV</sequence>
<accession>Q0SFQ8</accession>
<comment type="function">
    <text evidence="1">Catalyzes the oxidation of 5,10-methylenetetrahydrofolate to 5,10-methenyltetrahydrofolate and then the hydrolysis of 5,10-methenyltetrahydrofolate to 10-formyltetrahydrofolate.</text>
</comment>
<comment type="catalytic activity">
    <reaction evidence="1">
        <text>(6R)-5,10-methylene-5,6,7,8-tetrahydrofolate + NADP(+) = (6R)-5,10-methenyltetrahydrofolate + NADPH</text>
        <dbReference type="Rhea" id="RHEA:22812"/>
        <dbReference type="ChEBI" id="CHEBI:15636"/>
        <dbReference type="ChEBI" id="CHEBI:57455"/>
        <dbReference type="ChEBI" id="CHEBI:57783"/>
        <dbReference type="ChEBI" id="CHEBI:58349"/>
        <dbReference type="EC" id="1.5.1.5"/>
    </reaction>
</comment>
<comment type="catalytic activity">
    <reaction evidence="1">
        <text>(6R)-5,10-methenyltetrahydrofolate + H2O = (6R)-10-formyltetrahydrofolate + H(+)</text>
        <dbReference type="Rhea" id="RHEA:23700"/>
        <dbReference type="ChEBI" id="CHEBI:15377"/>
        <dbReference type="ChEBI" id="CHEBI:15378"/>
        <dbReference type="ChEBI" id="CHEBI:57455"/>
        <dbReference type="ChEBI" id="CHEBI:195366"/>
        <dbReference type="EC" id="3.5.4.9"/>
    </reaction>
</comment>
<comment type="pathway">
    <text evidence="1">One-carbon metabolism; tetrahydrofolate interconversion.</text>
</comment>
<comment type="subunit">
    <text evidence="1">Homodimer.</text>
</comment>
<comment type="similarity">
    <text evidence="1">Belongs to the tetrahydrofolate dehydrogenase/cyclohydrolase family.</text>
</comment>